<dbReference type="EMBL" id="AE000516">
    <property type="protein sequence ID" value="AAK46310.1"/>
    <property type="molecule type" value="Genomic_DNA"/>
</dbReference>
<dbReference type="RefSeq" id="WP_003409968.1">
    <property type="nucleotide sequence ID" value="NZ_KK341227.1"/>
</dbReference>
<dbReference type="SMR" id="P9WJ28"/>
<dbReference type="KEGG" id="mtc:MT2035"/>
<dbReference type="PATRIC" id="fig|83331.31.peg.2190"/>
<dbReference type="HOGENOM" id="CLU_165457_0_0_11"/>
<dbReference type="Proteomes" id="UP000001020">
    <property type="component" value="Chromosome"/>
</dbReference>
<dbReference type="InterPro" id="IPR011660">
    <property type="entry name" value="VapB-like"/>
</dbReference>
<dbReference type="Pfam" id="PF07704">
    <property type="entry name" value="PSK_trans_fac"/>
    <property type="match status" value="1"/>
</dbReference>
<organism>
    <name type="scientific">Mycobacterium tuberculosis (strain CDC 1551 / Oshkosh)</name>
    <dbReference type="NCBI Taxonomy" id="83331"/>
    <lineage>
        <taxon>Bacteria</taxon>
        <taxon>Bacillati</taxon>
        <taxon>Actinomycetota</taxon>
        <taxon>Actinomycetes</taxon>
        <taxon>Mycobacteriales</taxon>
        <taxon>Mycobacteriaceae</taxon>
        <taxon>Mycobacterium</taxon>
        <taxon>Mycobacterium tuberculosis complex</taxon>
    </lineage>
</organism>
<accession>P9WJ28</accession>
<accession>F2GGN1</accession>
<accession>P0CW35</accession>
<accession>Q8VJT1</accession>
<feature type="chain" id="PRO_0000427902" description="Putative antitoxin VapB36">
    <location>
        <begin position="1"/>
        <end position="86"/>
    </location>
</feature>
<sequence>MALNIKDPEVDRLAAELADRLHTSKTAAIRHALSAQLAFLESRAGDREAQLLDILRTEIWPLLADRSPITKLEREQILGYDPATGV</sequence>
<keyword id="KW-1185">Reference proteome</keyword>
<keyword id="KW-1277">Toxin-antitoxin system</keyword>
<evidence type="ECO:0000305" key="1"/>
<proteinExistence type="predicted"/>
<name>VPB36_MYCTO</name>
<gene>
    <name type="primary">vapB36</name>
    <name type="ordered locus">MT2035</name>
</gene>
<comment type="function">
    <text evidence="1">Possibly the antitoxin component of a type II toxin-antitoxin (TA) system. Its cognate toxin is VapC36 (Potential).</text>
</comment>
<protein>
    <recommendedName>
        <fullName>Putative antitoxin VapB36</fullName>
    </recommendedName>
</protein>
<reference key="1">
    <citation type="journal article" date="2002" name="J. Bacteriol.">
        <title>Whole-genome comparison of Mycobacterium tuberculosis clinical and laboratory strains.</title>
        <authorList>
            <person name="Fleischmann R.D."/>
            <person name="Alland D."/>
            <person name="Eisen J.A."/>
            <person name="Carpenter L."/>
            <person name="White O."/>
            <person name="Peterson J.D."/>
            <person name="DeBoy R.T."/>
            <person name="Dodson R.J."/>
            <person name="Gwinn M.L."/>
            <person name="Haft D.H."/>
            <person name="Hickey E.K."/>
            <person name="Kolonay J.F."/>
            <person name="Nelson W.C."/>
            <person name="Umayam L.A."/>
            <person name="Ermolaeva M.D."/>
            <person name="Salzberg S.L."/>
            <person name="Delcher A."/>
            <person name="Utterback T.R."/>
            <person name="Weidman J.F."/>
            <person name="Khouri H.M."/>
            <person name="Gill J."/>
            <person name="Mikula A."/>
            <person name="Bishai W."/>
            <person name="Jacobs W.R. Jr."/>
            <person name="Venter J.C."/>
            <person name="Fraser C.M."/>
        </authorList>
    </citation>
    <scope>NUCLEOTIDE SEQUENCE [LARGE SCALE GENOMIC DNA]</scope>
    <source>
        <strain>CDC 1551 / Oshkosh</strain>
    </source>
</reference>